<name>TNFL6_FELCA</name>
<dbReference type="EMBL" id="AB009280">
    <property type="protein sequence ID" value="BAC76426.1"/>
    <property type="molecule type" value="mRNA"/>
</dbReference>
<dbReference type="RefSeq" id="NP_001009352.1">
    <property type="nucleotide sequence ID" value="NM_001009352.1"/>
</dbReference>
<dbReference type="SMR" id="Q861W5"/>
<dbReference type="FunCoup" id="Q861W5">
    <property type="interactions" value="95"/>
</dbReference>
<dbReference type="STRING" id="9685.ENSFCAP00000033003"/>
<dbReference type="GlyCosmos" id="Q861W5">
    <property type="glycosylation" value="3 sites, No reported glycans"/>
</dbReference>
<dbReference type="PaxDb" id="9685-ENSFCAP00000005431"/>
<dbReference type="Ensembl" id="ENSFCAT00000047262.3">
    <property type="protein sequence ID" value="ENSFCAP00000033003.1"/>
    <property type="gene ID" value="ENSFCAG00000035145.3"/>
</dbReference>
<dbReference type="GeneID" id="493945"/>
<dbReference type="KEGG" id="fca:493945"/>
<dbReference type="CTD" id="356"/>
<dbReference type="VGNC" id="VGNC:107871">
    <property type="gene designation" value="FASLG"/>
</dbReference>
<dbReference type="eggNOG" id="ENOG502RXC1">
    <property type="taxonomic scope" value="Eukaryota"/>
</dbReference>
<dbReference type="GeneTree" id="ENSGT01060000248544"/>
<dbReference type="HOGENOM" id="CLU_070352_2_0_1"/>
<dbReference type="InParanoid" id="Q861W5"/>
<dbReference type="OMA" id="KVKRSAH"/>
<dbReference type="OrthoDB" id="5983780at2759"/>
<dbReference type="Proteomes" id="UP000011712">
    <property type="component" value="Chromosome F1"/>
</dbReference>
<dbReference type="Bgee" id="ENSFCAG00000035145">
    <property type="expression patterns" value="Expressed in spleen and 4 other cell types or tissues"/>
</dbReference>
<dbReference type="GO" id="GO:0060205">
    <property type="term" value="C:cytoplasmic vesicle lumen"/>
    <property type="evidence" value="ECO:0007669"/>
    <property type="project" value="UniProtKB-SubCell"/>
</dbReference>
<dbReference type="GO" id="GO:0009897">
    <property type="term" value="C:external side of plasma membrane"/>
    <property type="evidence" value="ECO:0007669"/>
    <property type="project" value="Ensembl"/>
</dbReference>
<dbReference type="GO" id="GO:0070062">
    <property type="term" value="C:extracellular exosome"/>
    <property type="evidence" value="ECO:0007669"/>
    <property type="project" value="Ensembl"/>
</dbReference>
<dbReference type="GO" id="GO:0005615">
    <property type="term" value="C:extracellular space"/>
    <property type="evidence" value="ECO:0000318"/>
    <property type="project" value="GO_Central"/>
</dbReference>
<dbReference type="GO" id="GO:0043202">
    <property type="term" value="C:lysosomal lumen"/>
    <property type="evidence" value="ECO:0007669"/>
    <property type="project" value="UniProtKB-SubCell"/>
</dbReference>
<dbReference type="GO" id="GO:0005634">
    <property type="term" value="C:nucleus"/>
    <property type="evidence" value="ECO:0000250"/>
    <property type="project" value="UniProtKB"/>
</dbReference>
<dbReference type="GO" id="GO:0005125">
    <property type="term" value="F:cytokine activity"/>
    <property type="evidence" value="ECO:0000318"/>
    <property type="project" value="GO_Central"/>
</dbReference>
<dbReference type="GO" id="GO:0005164">
    <property type="term" value="F:tumor necrosis factor receptor binding"/>
    <property type="evidence" value="ECO:0007669"/>
    <property type="project" value="InterPro"/>
</dbReference>
<dbReference type="GO" id="GO:0008625">
    <property type="term" value="P:extrinsic apoptotic signaling pathway via death domain receptors"/>
    <property type="evidence" value="ECO:0000318"/>
    <property type="project" value="GO_Central"/>
</dbReference>
<dbReference type="GO" id="GO:0006955">
    <property type="term" value="P:immune response"/>
    <property type="evidence" value="ECO:0007669"/>
    <property type="project" value="InterPro"/>
</dbReference>
<dbReference type="GO" id="GO:0097527">
    <property type="term" value="P:necroptotic signaling pathway"/>
    <property type="evidence" value="ECO:0007669"/>
    <property type="project" value="Ensembl"/>
</dbReference>
<dbReference type="GO" id="GO:0016525">
    <property type="term" value="P:negative regulation of angiogenesis"/>
    <property type="evidence" value="ECO:0007669"/>
    <property type="project" value="Ensembl"/>
</dbReference>
<dbReference type="GO" id="GO:0000122">
    <property type="term" value="P:negative regulation of transcription by RNA polymerase II"/>
    <property type="evidence" value="ECO:0000250"/>
    <property type="project" value="UniProtKB"/>
</dbReference>
<dbReference type="GO" id="GO:0043123">
    <property type="term" value="P:positive regulation of canonical NF-kappaB signal transduction"/>
    <property type="evidence" value="ECO:0000318"/>
    <property type="project" value="GO_Central"/>
</dbReference>
<dbReference type="GO" id="GO:2000353">
    <property type="term" value="P:positive regulation of endothelial cell apoptotic process"/>
    <property type="evidence" value="ECO:0007669"/>
    <property type="project" value="Ensembl"/>
</dbReference>
<dbReference type="GO" id="GO:2001238">
    <property type="term" value="P:positive regulation of extrinsic apoptotic signaling pathway"/>
    <property type="evidence" value="ECO:0000318"/>
    <property type="project" value="GO_Central"/>
</dbReference>
<dbReference type="GO" id="GO:1905782">
    <property type="term" value="P:positive regulation of phosphatidylserine exposure on apoptotic cell surface"/>
    <property type="evidence" value="ECO:0007669"/>
    <property type="project" value="Ensembl"/>
</dbReference>
<dbReference type="GO" id="GO:1903514">
    <property type="term" value="P:release of sequestered calcium ion into cytosol by endoplasmic reticulum"/>
    <property type="evidence" value="ECO:0007669"/>
    <property type="project" value="Ensembl"/>
</dbReference>
<dbReference type="GO" id="GO:0046666">
    <property type="term" value="P:retinal cell programmed cell death"/>
    <property type="evidence" value="ECO:0007669"/>
    <property type="project" value="Ensembl"/>
</dbReference>
<dbReference type="GO" id="GO:0070231">
    <property type="term" value="P:T cell apoptotic process"/>
    <property type="evidence" value="ECO:0007669"/>
    <property type="project" value="Ensembl"/>
</dbReference>
<dbReference type="CDD" id="cd00184">
    <property type="entry name" value="TNF"/>
    <property type="match status" value="1"/>
</dbReference>
<dbReference type="FunFam" id="2.60.120.40:FF:000017">
    <property type="entry name" value="Tumor necrosis factor ligand superfamily member 6"/>
    <property type="match status" value="1"/>
</dbReference>
<dbReference type="Gene3D" id="2.60.120.40">
    <property type="match status" value="1"/>
</dbReference>
<dbReference type="InterPro" id="IPR028326">
    <property type="entry name" value="FASL"/>
</dbReference>
<dbReference type="InterPro" id="IPR006053">
    <property type="entry name" value="TNF"/>
</dbReference>
<dbReference type="InterPro" id="IPR021184">
    <property type="entry name" value="TNF_CS"/>
</dbReference>
<dbReference type="InterPro" id="IPR006052">
    <property type="entry name" value="TNF_dom"/>
</dbReference>
<dbReference type="InterPro" id="IPR008983">
    <property type="entry name" value="Tumour_necrosis_fac-like_dom"/>
</dbReference>
<dbReference type="PANTHER" id="PTHR11471">
    <property type="entry name" value="TUMOR NECROSIS FACTOR FAMILY MEMBER"/>
    <property type="match status" value="1"/>
</dbReference>
<dbReference type="PANTHER" id="PTHR11471:SF33">
    <property type="entry name" value="TUMOR NECROSIS FACTOR LIGAND SUPERFAMILY MEMBER 6"/>
    <property type="match status" value="1"/>
</dbReference>
<dbReference type="Pfam" id="PF00229">
    <property type="entry name" value="TNF"/>
    <property type="match status" value="1"/>
</dbReference>
<dbReference type="PRINTS" id="PR01681">
    <property type="entry name" value="FASLIGAND"/>
</dbReference>
<dbReference type="PRINTS" id="PR01234">
    <property type="entry name" value="TNECROSISFCT"/>
</dbReference>
<dbReference type="SMART" id="SM00207">
    <property type="entry name" value="TNF"/>
    <property type="match status" value="1"/>
</dbReference>
<dbReference type="SUPFAM" id="SSF49842">
    <property type="entry name" value="TNF-like"/>
    <property type="match status" value="1"/>
</dbReference>
<dbReference type="PROSITE" id="PS00251">
    <property type="entry name" value="THD_1"/>
    <property type="match status" value="1"/>
</dbReference>
<dbReference type="PROSITE" id="PS50049">
    <property type="entry name" value="THD_2"/>
    <property type="match status" value="1"/>
</dbReference>
<gene>
    <name type="primary">FASLG</name>
    <name type="synonym">FASL</name>
    <name type="synonym">TNFSF6</name>
</gene>
<comment type="function">
    <text evidence="2 3">Cytokine that binds to TNFRSF6/FAS, a receptor that transduces the apoptotic signal into cells. Involved in cytotoxic T-cell-mediated apoptosis, natural killer cell-mediated apoptosis and in T-cell development. Initiates fratricidal/suicidal activation-induced cell death (AICD) in antigen-activated T-cells contributing to the termination of immune responses. TNFRSF6/FAS-mediated apoptosis has also a role in the induction of peripheral tolerance. Binds to TNFRSF6B/DcR3, a decoy receptor that blocks apoptosis.</text>
</comment>
<comment type="function">
    <molecule>Tumor necrosis factor ligand superfamily member 6, soluble form</molecule>
    <text evidence="2">Induces FAS-mediated activation of NF-kappa-B, initiating non-apoptotic signaling pathways. Can induce apoptosis but does not appear to be essential for this process.</text>
</comment>
<comment type="function">
    <molecule>FasL intracellular domain</molecule>
    <text evidence="3">Cytoplasmic form induces gene transcription inhibition.</text>
</comment>
<comment type="subunit">
    <text evidence="3">Homotrimer. Interacts with ARHGAP9, BAIAP2L1, BTK, CACNB3, CACNB4, CRK, DLG2, DNMBP, DOCK4, EPS8L3, FGR, FYB1, FYN, HCK, ITK, ITSN2, KALRN, LYN, MACC1, MIA, MPP4, MYO15A, NCF1, NCK1, NCK2, NCKIPSD, OSTF1, PIK3R1, PSTPIP1, RIMBP3C, SAMSN1, SH3GL3, SH3PXD2B, SH3PXD2A, SH3RF2, SKAP2, SNX33, SNX9, SORBS3, SPTA1, SRC, SRGAP1, SRGAP2, SRGAP3, TEC, TJP3 and YES1.</text>
</comment>
<comment type="subcellular location">
    <subcellularLocation>
        <location evidence="3">Cell membrane</location>
        <topology evidence="4">Single-pass type II membrane protein</topology>
    </subcellularLocation>
    <subcellularLocation>
        <location evidence="3">Cytoplasmic vesicle lumen</location>
    </subcellularLocation>
    <subcellularLocation>
        <location evidence="3">Lysosome lumen</location>
    </subcellularLocation>
    <text evidence="3">Colocalizes with the SPPL2A protease at the cell membrane. Is internalized into multivesicular bodies of secretory lysosomes after phosphorylation by FGR and monoubiquitination.</text>
</comment>
<comment type="subcellular location">
    <molecule>Tumor necrosis factor ligand superfamily member 6, soluble form</molecule>
    <subcellularLocation>
        <location evidence="3">Secreted</location>
    </subcellularLocation>
    <text evidence="3">May be released into the extracellular fluid by cleavage from the cell surface.</text>
</comment>
<comment type="subcellular location">
    <molecule>FasL intracellular domain</molecule>
    <subcellularLocation>
        <location evidence="3">Nucleus</location>
    </subcellularLocation>
    <text evidence="3">The FasL ICD cytoplasmic form is translocated into the nucleus.</text>
</comment>
<comment type="PTM">
    <text evidence="3">The soluble form derives from the membrane form by proteolytic processing. The membrane-bound form undergoes two successive intramembrane proteolytic cleavages. The first one is processed by ADAM10 producing an N-terminal fragment, which lacks the receptor-binding extracellular domain. This ADAM10-processed FasL (FasL APL) remnant form is still membrane anchored and further processed by SPPL2A that liberates the FasL intracellular domain (FasL ICD). FasL shedding by ADAM10 is a prerequisite for subsequent intramembrane cleavage by SPPL2A in T-cells.</text>
</comment>
<comment type="PTM">
    <text evidence="3">Phosphorylated by FGR on tyrosine residues; this is required for ubiquitination and subsequent internalization.</text>
</comment>
<comment type="PTM">
    <text evidence="3">N-glycosylated. Glycosylation enhances apoptotic activity.</text>
</comment>
<comment type="PTM">
    <text evidence="3">Monoubiquitinated.</text>
</comment>
<comment type="similarity">
    <text evidence="7">Belongs to the tumor necrosis factor family.</text>
</comment>
<proteinExistence type="evidence at transcript level"/>
<evidence type="ECO:0000250" key="1"/>
<evidence type="ECO:0000250" key="2">
    <source>
        <dbReference type="UniProtKB" id="P41047"/>
    </source>
</evidence>
<evidence type="ECO:0000250" key="3">
    <source>
        <dbReference type="UniProtKB" id="P48023"/>
    </source>
</evidence>
<evidence type="ECO:0000255" key="4"/>
<evidence type="ECO:0000255" key="5">
    <source>
        <dbReference type="PROSITE-ProRule" id="PRU01387"/>
    </source>
</evidence>
<evidence type="ECO:0000256" key="6">
    <source>
        <dbReference type="SAM" id="MobiDB-lite"/>
    </source>
</evidence>
<evidence type="ECO:0000305" key="7"/>
<sequence>MQQPLNYPYPQIYWVDSRASSPWGPPGSVLPCPSSVPGRPGQRRPPPPPPPTLPPPPPPPPLPPLPLPPLKTRRDHNTGLCLLVMFFMVLVALVGLGLGMFQLFHLQKELAELRESTSQKHVASSLEKQIGQLNPPSEKRELRKVAHLTGKPNSRSIPLEWEDTYGIALVSGVKYKKGGLVINDTGMYFVYSKVNFRGQSCNNQPLNHKVYMRNSKYPQDLVLMEGKMMNYCTTGQMWARSSYLGAVFNLTSADHLYVNVSELSLVSFEESKTFFGLYKL</sequence>
<reference key="1">
    <citation type="journal article" date="1998" name="Vet. Immunol. Immunopathol.">
        <title>Molecular cloning of feline Fas antigen and Fas ligand cDNAs.</title>
        <authorList>
            <person name="Mizuno T."/>
            <person name="Endo Y."/>
            <person name="Momoi Y."/>
            <person name="Goto Y."/>
            <person name="Nishimura Y."/>
            <person name="Tsubota K."/>
            <person name="Mikami T."/>
            <person name="Ohno K."/>
            <person name="Watari T."/>
            <person name="Tsujimoto H."/>
            <person name="Hasegawa A."/>
        </authorList>
    </citation>
    <scope>NUCLEOTIDE SEQUENCE [MRNA]</scope>
</reference>
<feature type="chain" id="PRO_0000227011" description="Tumor necrosis factor ligand superfamily member 6, membrane form">
    <location>
        <begin position="1"/>
        <end position="280"/>
    </location>
</feature>
<feature type="chain" id="PRO_0000417150" description="ADAM10-processed FasL form" evidence="1">
    <location>
        <begin position="1"/>
        <end position="128"/>
    </location>
</feature>
<feature type="chain" id="PRO_0000417151" description="FasL intracellular domain" evidence="1">
    <location>
        <begin position="1"/>
        <end position="81"/>
    </location>
</feature>
<feature type="chain" id="PRO_0000227012" description="Tumor necrosis factor ligand superfamily member 6, soluble form" evidence="1">
    <location>
        <begin position="129"/>
        <end position="280"/>
    </location>
</feature>
<feature type="topological domain" description="Cytoplasmic" evidence="4">
    <location>
        <begin position="1"/>
        <end position="80"/>
    </location>
</feature>
<feature type="transmembrane region" description="Helical; Signal-anchor for type II membrane protein" evidence="4">
    <location>
        <begin position="81"/>
        <end position="101"/>
    </location>
</feature>
<feature type="topological domain" description="Extracellular" evidence="4">
    <location>
        <begin position="102"/>
        <end position="280"/>
    </location>
</feature>
<feature type="domain" description="THD" evidence="5">
    <location>
        <begin position="144"/>
        <end position="280"/>
    </location>
</feature>
<feature type="region of interest" description="Disordered" evidence="6">
    <location>
        <begin position="20"/>
        <end position="71"/>
    </location>
</feature>
<feature type="compositionally biased region" description="Pro residues" evidence="6">
    <location>
        <begin position="43"/>
        <end position="69"/>
    </location>
</feature>
<feature type="site" description="Cleavage; by SPPL2A" evidence="1">
    <location>
        <begin position="80"/>
        <end position="81"/>
    </location>
</feature>
<feature type="site" description="Cleavage; by ADAM10" evidence="1">
    <location>
        <begin position="128"/>
        <end position="129"/>
    </location>
</feature>
<feature type="glycosylation site" description="N-linked (GlcNAc...) asparagine" evidence="4">
    <location>
        <position position="183"/>
    </location>
</feature>
<feature type="glycosylation site" description="N-linked (GlcNAc...) asparagine" evidence="4">
    <location>
        <position position="249"/>
    </location>
</feature>
<feature type="glycosylation site" description="N-linked (GlcNAc...) asparagine" evidence="4">
    <location>
        <position position="259"/>
    </location>
</feature>
<feature type="disulfide bond" evidence="5">
    <location>
        <begin position="201"/>
        <end position="232"/>
    </location>
</feature>
<protein>
    <recommendedName>
        <fullName>Tumor necrosis factor ligand superfamily member 6</fullName>
    </recommendedName>
    <alternativeName>
        <fullName>Fas antigen ligand</fullName>
        <shortName>Fas ligand</shortName>
        <shortName>FasL</shortName>
    </alternativeName>
    <cdAntigenName>CD178</cdAntigenName>
    <component>
        <recommendedName>
            <fullName>Tumor necrosis factor ligand superfamily member 6, membrane form</fullName>
        </recommendedName>
    </component>
    <component>
        <recommendedName>
            <fullName>Tumor necrosis factor ligand superfamily member 6, soluble form</fullName>
        </recommendedName>
        <alternativeName>
            <fullName>Receptor-binding FasL ectodomain</fullName>
        </alternativeName>
        <alternativeName>
            <fullName>Soluble Fas ligand</fullName>
            <shortName>sFasL</shortName>
        </alternativeName>
    </component>
    <component>
        <recommendedName>
            <fullName>ADAM10-processed FasL form</fullName>
            <shortName>APL</shortName>
        </recommendedName>
    </component>
    <component>
        <recommendedName>
            <fullName>FasL intracellular domain</fullName>
            <shortName>FasL ICD</shortName>
        </recommendedName>
        <alternativeName>
            <fullName>SPPL2A-processed FasL form</fullName>
            <shortName>SPA</shortName>
        </alternativeName>
    </component>
</protein>
<organism>
    <name type="scientific">Felis catus</name>
    <name type="common">Cat</name>
    <name type="synonym">Felis silvestris catus</name>
    <dbReference type="NCBI Taxonomy" id="9685"/>
    <lineage>
        <taxon>Eukaryota</taxon>
        <taxon>Metazoa</taxon>
        <taxon>Chordata</taxon>
        <taxon>Craniata</taxon>
        <taxon>Vertebrata</taxon>
        <taxon>Euteleostomi</taxon>
        <taxon>Mammalia</taxon>
        <taxon>Eutheria</taxon>
        <taxon>Laurasiatheria</taxon>
        <taxon>Carnivora</taxon>
        <taxon>Feliformia</taxon>
        <taxon>Felidae</taxon>
        <taxon>Felinae</taxon>
        <taxon>Felis</taxon>
    </lineage>
</organism>
<accession>Q861W5</accession>
<keyword id="KW-0053">Apoptosis</keyword>
<keyword id="KW-1003">Cell membrane</keyword>
<keyword id="KW-0202">Cytokine</keyword>
<keyword id="KW-0968">Cytoplasmic vesicle</keyword>
<keyword id="KW-1015">Disulfide bond</keyword>
<keyword id="KW-0325">Glycoprotein</keyword>
<keyword id="KW-0458">Lysosome</keyword>
<keyword id="KW-0472">Membrane</keyword>
<keyword id="KW-0539">Nucleus</keyword>
<keyword id="KW-1185">Reference proteome</keyword>
<keyword id="KW-0678">Repressor</keyword>
<keyword id="KW-0964">Secreted</keyword>
<keyword id="KW-0735">Signal-anchor</keyword>
<keyword id="KW-0804">Transcription</keyword>
<keyword id="KW-0805">Transcription regulation</keyword>
<keyword id="KW-0812">Transmembrane</keyword>
<keyword id="KW-1133">Transmembrane helix</keyword>
<keyword id="KW-0832">Ubl conjugation</keyword>